<protein>
    <recommendedName>
        <fullName>Peroxisome biogenesis factor 10</fullName>
        <ecNumber evidence="2">2.3.2.27</ecNumber>
    </recommendedName>
    <alternativeName>
        <fullName>PER10</fullName>
    </alternativeName>
    <alternativeName>
        <fullName>Peroxin-10</fullName>
    </alternativeName>
    <alternativeName>
        <fullName>Peroxisomal biogenesis factor 10</fullName>
        <shortName>AtPEX10</shortName>
        <shortName>AthPEX10</shortName>
    </alternativeName>
    <alternativeName>
        <fullName>Peroxisome assembly protein 10</fullName>
    </alternativeName>
    <alternativeName>
        <fullName>Pex10p</fullName>
    </alternativeName>
</protein>
<dbReference type="EC" id="2.3.2.27" evidence="2"/>
<dbReference type="EMBL" id="AF119572">
    <property type="protein sequence ID" value="AAD18035.1"/>
    <property type="molecule type" value="mRNA"/>
</dbReference>
<dbReference type="EMBL" id="AJ276134">
    <property type="protein sequence ID" value="CAB87983.1"/>
    <property type="molecule type" value="mRNA"/>
</dbReference>
<dbReference type="EMBL" id="AC002505">
    <property type="protein sequence ID" value="AAC14514.2"/>
    <property type="molecule type" value="Genomic_DNA"/>
</dbReference>
<dbReference type="EMBL" id="AC004484">
    <property type="protein sequence ID" value="AAM14959.1"/>
    <property type="status" value="ALT_SEQ"/>
    <property type="molecule type" value="Genomic_DNA"/>
</dbReference>
<dbReference type="EMBL" id="CP002685">
    <property type="protein sequence ID" value="AEC07828.1"/>
    <property type="molecule type" value="Genomic_DNA"/>
</dbReference>
<dbReference type="EMBL" id="AK117879">
    <property type="protein sequence ID" value="BAC42519.1"/>
    <property type="molecule type" value="mRNA"/>
</dbReference>
<dbReference type="EMBL" id="BT005340">
    <property type="protein sequence ID" value="AAO63404.1"/>
    <property type="molecule type" value="mRNA"/>
</dbReference>
<dbReference type="EMBL" id="AY087109">
    <property type="protein sequence ID" value="AAM64667.1"/>
    <property type="molecule type" value="mRNA"/>
</dbReference>
<dbReference type="PIR" id="T00968">
    <property type="entry name" value="T00968"/>
</dbReference>
<dbReference type="RefSeq" id="NP_001323819.1">
    <property type="nucleotide sequence ID" value="NM_001336060.1"/>
</dbReference>
<dbReference type="RefSeq" id="NP_565621.1">
    <property type="nucleotide sequence ID" value="NM_128192.2"/>
</dbReference>
<dbReference type="SMR" id="Q9SYU4"/>
<dbReference type="BioGRID" id="2527">
    <property type="interactions" value="3"/>
</dbReference>
<dbReference type="FunCoup" id="Q9SYU4">
    <property type="interactions" value="3965"/>
</dbReference>
<dbReference type="IntAct" id="Q9SYU4">
    <property type="interactions" value="3"/>
</dbReference>
<dbReference type="STRING" id="3702.Q9SYU4"/>
<dbReference type="TCDB" id="3.A.20.1.2">
    <property type="family name" value="the peroxisomal protein importer (ppi) family"/>
</dbReference>
<dbReference type="GlyGen" id="Q9SYU4">
    <property type="glycosylation" value="1 site"/>
</dbReference>
<dbReference type="PaxDb" id="3702-AT2G26350.1"/>
<dbReference type="ProteomicsDB" id="236427"/>
<dbReference type="EnsemblPlants" id="AT2G26350.1">
    <property type="protein sequence ID" value="AT2G26350.1"/>
    <property type="gene ID" value="AT2G26350"/>
</dbReference>
<dbReference type="GeneID" id="817175"/>
<dbReference type="Gramene" id="AT2G26350.1">
    <property type="protein sequence ID" value="AT2G26350.1"/>
    <property type="gene ID" value="AT2G26350"/>
</dbReference>
<dbReference type="KEGG" id="ath:AT2G26350"/>
<dbReference type="Araport" id="AT2G26350"/>
<dbReference type="TAIR" id="AT2G26350">
    <property type="gene designation" value="PEX10"/>
</dbReference>
<dbReference type="eggNOG" id="KOG0317">
    <property type="taxonomic scope" value="Eukaryota"/>
</dbReference>
<dbReference type="HOGENOM" id="CLU_041707_0_0_1"/>
<dbReference type="InParanoid" id="Q9SYU4"/>
<dbReference type="OMA" id="YCDVVQL"/>
<dbReference type="PhylomeDB" id="Q9SYU4"/>
<dbReference type="UniPathway" id="UPA00143"/>
<dbReference type="PRO" id="PR:Q9SYU4"/>
<dbReference type="Proteomes" id="UP000006548">
    <property type="component" value="Chromosome 2"/>
</dbReference>
<dbReference type="ExpressionAtlas" id="Q9SYU4">
    <property type="expression patterns" value="baseline and differential"/>
</dbReference>
<dbReference type="GO" id="GO:0005829">
    <property type="term" value="C:cytosol"/>
    <property type="evidence" value="ECO:0000314"/>
    <property type="project" value="TAIR"/>
</dbReference>
<dbReference type="GO" id="GO:0005778">
    <property type="term" value="C:peroxisomal membrane"/>
    <property type="evidence" value="ECO:0007669"/>
    <property type="project" value="UniProtKB-SubCell"/>
</dbReference>
<dbReference type="GO" id="GO:0005777">
    <property type="term" value="C:peroxisome"/>
    <property type="evidence" value="ECO:0000314"/>
    <property type="project" value="TAIR"/>
</dbReference>
<dbReference type="GO" id="GO:0004842">
    <property type="term" value="F:ubiquitin-protein transferase activity"/>
    <property type="evidence" value="ECO:0000314"/>
    <property type="project" value="TAIR"/>
</dbReference>
<dbReference type="GO" id="GO:0008270">
    <property type="term" value="F:zinc ion binding"/>
    <property type="evidence" value="ECO:0007669"/>
    <property type="project" value="UniProtKB-KW"/>
</dbReference>
<dbReference type="GO" id="GO:0009793">
    <property type="term" value="P:embryo development ending in seed dormancy"/>
    <property type="evidence" value="ECO:0000315"/>
    <property type="project" value="TAIR"/>
</dbReference>
<dbReference type="GO" id="GO:0006635">
    <property type="term" value="P:fatty acid beta-oxidation"/>
    <property type="evidence" value="ECO:0000315"/>
    <property type="project" value="TAIR"/>
</dbReference>
<dbReference type="GO" id="GO:0007031">
    <property type="term" value="P:peroxisome organization"/>
    <property type="evidence" value="ECO:0000315"/>
    <property type="project" value="TAIR"/>
</dbReference>
<dbReference type="GO" id="GO:0010381">
    <property type="term" value="P:peroxisome-chloroplast membrane tethering"/>
    <property type="evidence" value="ECO:0000315"/>
    <property type="project" value="TAIR"/>
</dbReference>
<dbReference type="GO" id="GO:0009853">
    <property type="term" value="P:photorespiration"/>
    <property type="evidence" value="ECO:0000315"/>
    <property type="project" value="TAIR"/>
</dbReference>
<dbReference type="GO" id="GO:0016558">
    <property type="term" value="P:protein import into peroxisome matrix"/>
    <property type="evidence" value="ECO:0000315"/>
    <property type="project" value="TAIR"/>
</dbReference>
<dbReference type="GO" id="GO:0006513">
    <property type="term" value="P:protein monoubiquitination"/>
    <property type="evidence" value="ECO:0000314"/>
    <property type="project" value="TAIR"/>
</dbReference>
<dbReference type="CDD" id="cd16527">
    <property type="entry name" value="RING-HC_PEX10"/>
    <property type="match status" value="1"/>
</dbReference>
<dbReference type="FunFam" id="3.30.40.10:FF:000418">
    <property type="entry name" value="Peroxisome biogenesis factor 10"/>
    <property type="match status" value="1"/>
</dbReference>
<dbReference type="Gene3D" id="3.30.40.10">
    <property type="entry name" value="Zinc/RING finger domain, C3HC4 (zinc finger)"/>
    <property type="match status" value="1"/>
</dbReference>
<dbReference type="InterPro" id="IPR025654">
    <property type="entry name" value="PEX2/10"/>
</dbReference>
<dbReference type="InterPro" id="IPR006845">
    <property type="entry name" value="Pex_N"/>
</dbReference>
<dbReference type="InterPro" id="IPR001841">
    <property type="entry name" value="Znf_RING"/>
</dbReference>
<dbReference type="InterPro" id="IPR013083">
    <property type="entry name" value="Znf_RING/FYVE/PHD"/>
</dbReference>
<dbReference type="InterPro" id="IPR017907">
    <property type="entry name" value="Znf_RING_CS"/>
</dbReference>
<dbReference type="PANTHER" id="PTHR23350">
    <property type="entry name" value="PEROXISOME ASSEMBLY PROTEIN 10"/>
    <property type="match status" value="1"/>
</dbReference>
<dbReference type="PANTHER" id="PTHR23350:SF0">
    <property type="entry name" value="PEROXISOME BIOGENESIS FACTOR 10"/>
    <property type="match status" value="1"/>
</dbReference>
<dbReference type="Pfam" id="PF04757">
    <property type="entry name" value="Pex2_Pex12"/>
    <property type="match status" value="1"/>
</dbReference>
<dbReference type="Pfam" id="PF13639">
    <property type="entry name" value="zf-RING_2"/>
    <property type="match status" value="1"/>
</dbReference>
<dbReference type="SMART" id="SM00184">
    <property type="entry name" value="RING"/>
    <property type="match status" value="1"/>
</dbReference>
<dbReference type="SUPFAM" id="SSF57850">
    <property type="entry name" value="RING/U-box"/>
    <property type="match status" value="1"/>
</dbReference>
<dbReference type="PROSITE" id="PS00518">
    <property type="entry name" value="ZF_RING_1"/>
    <property type="match status" value="1"/>
</dbReference>
<dbReference type="PROSITE" id="PS50089">
    <property type="entry name" value="ZF_RING_2"/>
    <property type="match status" value="1"/>
</dbReference>
<organism>
    <name type="scientific">Arabidopsis thaliana</name>
    <name type="common">Mouse-ear cress</name>
    <dbReference type="NCBI Taxonomy" id="3702"/>
    <lineage>
        <taxon>Eukaryota</taxon>
        <taxon>Viridiplantae</taxon>
        <taxon>Streptophyta</taxon>
        <taxon>Embryophyta</taxon>
        <taxon>Tracheophyta</taxon>
        <taxon>Spermatophyta</taxon>
        <taxon>Magnoliopsida</taxon>
        <taxon>eudicotyledons</taxon>
        <taxon>Gunneridae</taxon>
        <taxon>Pentapetalae</taxon>
        <taxon>rosids</taxon>
        <taxon>malvids</taxon>
        <taxon>Brassicales</taxon>
        <taxon>Brassicaceae</taxon>
        <taxon>Camelineae</taxon>
        <taxon>Arabidopsis</taxon>
    </lineage>
</organism>
<accession>Q9SYU4</accession>
<accession>O65895</accession>
<accession>Q8LBN2</accession>
<accession>Q8S8Q5</accession>
<accession>Q9M400</accession>
<proteinExistence type="evidence at protein level"/>
<name>PEX10_ARATH</name>
<gene>
    <name type="primary">PEX10</name>
    <name type="ordered locus">At2g26350</name>
    <name type="ORF">T9J22.2</name>
</gene>
<reference key="1">
    <citation type="online journal article" date="1999" name="Plant Gene Register">
        <title>Sequence analysis of a cDNA encoding Pex10p, a zinc-binding peroxisomal integral membrane protein from Arabidopsis thaliana.</title>
        <authorList>
            <person name="Schumann U."/>
            <person name="Gietl C."/>
            <person name="Schmid M."/>
        </authorList>
        <locator>PGR99-025</locator>
    </citation>
    <scope>NUCLEOTIDE SEQUENCE [MRNA]</scope>
</reference>
<reference key="2">
    <citation type="journal article" date="2000" name="Biochem. Soc. Trans.">
        <title>Biochemical and molecular approaches to understanding protein import into peroxisomes.</title>
        <authorList>
            <person name="Baker A."/>
            <person name="Charlton W."/>
            <person name="Johnson B."/>
            <person name="Lopez-Huertas E."/>
            <person name="Oh J."/>
            <person name="Sparkes I."/>
            <person name="Thomas J."/>
        </authorList>
    </citation>
    <scope>NUCLEOTIDE SEQUENCE [MRNA]</scope>
    <source>
        <strain>cv. Columbia</strain>
    </source>
</reference>
<reference key="3">
    <citation type="journal article" date="1999" name="Nature">
        <title>Sequence and analysis of chromosome 2 of the plant Arabidopsis thaliana.</title>
        <authorList>
            <person name="Lin X."/>
            <person name="Kaul S."/>
            <person name="Rounsley S.D."/>
            <person name="Shea T.P."/>
            <person name="Benito M.-I."/>
            <person name="Town C.D."/>
            <person name="Fujii C.Y."/>
            <person name="Mason T.M."/>
            <person name="Bowman C.L."/>
            <person name="Barnstead M.E."/>
            <person name="Feldblyum T.V."/>
            <person name="Buell C.R."/>
            <person name="Ketchum K.A."/>
            <person name="Lee J.J."/>
            <person name="Ronning C.M."/>
            <person name="Koo H.L."/>
            <person name="Moffat K.S."/>
            <person name="Cronin L.A."/>
            <person name="Shen M."/>
            <person name="Pai G."/>
            <person name="Van Aken S."/>
            <person name="Umayam L."/>
            <person name="Tallon L.J."/>
            <person name="Gill J.E."/>
            <person name="Adams M.D."/>
            <person name="Carrera A.J."/>
            <person name="Creasy T.H."/>
            <person name="Goodman H.M."/>
            <person name="Somerville C.R."/>
            <person name="Copenhaver G.P."/>
            <person name="Preuss D."/>
            <person name="Nierman W.C."/>
            <person name="White O."/>
            <person name="Eisen J.A."/>
            <person name="Salzberg S.L."/>
            <person name="Fraser C.M."/>
            <person name="Venter J.C."/>
        </authorList>
    </citation>
    <scope>NUCLEOTIDE SEQUENCE [LARGE SCALE GENOMIC DNA]</scope>
    <source>
        <strain>cv. Columbia</strain>
    </source>
</reference>
<reference key="4">
    <citation type="journal article" date="2017" name="Plant J.">
        <title>Araport11: a complete reannotation of the Arabidopsis thaliana reference genome.</title>
        <authorList>
            <person name="Cheng C.Y."/>
            <person name="Krishnakumar V."/>
            <person name="Chan A.P."/>
            <person name="Thibaud-Nissen F."/>
            <person name="Schobel S."/>
            <person name="Town C.D."/>
        </authorList>
    </citation>
    <scope>GENOME REANNOTATION</scope>
    <source>
        <strain>cv. Columbia</strain>
    </source>
</reference>
<reference key="5">
    <citation type="journal article" date="2002" name="Science">
        <title>Functional annotation of a full-length Arabidopsis cDNA collection.</title>
        <authorList>
            <person name="Seki M."/>
            <person name="Narusaka M."/>
            <person name="Kamiya A."/>
            <person name="Ishida J."/>
            <person name="Satou M."/>
            <person name="Sakurai T."/>
            <person name="Nakajima M."/>
            <person name="Enju A."/>
            <person name="Akiyama K."/>
            <person name="Oono Y."/>
            <person name="Muramatsu M."/>
            <person name="Hayashizaki Y."/>
            <person name="Kawai J."/>
            <person name="Carninci P."/>
            <person name="Itoh M."/>
            <person name="Ishii Y."/>
            <person name="Arakawa T."/>
            <person name="Shibata K."/>
            <person name="Shinagawa A."/>
            <person name="Shinozaki K."/>
        </authorList>
    </citation>
    <scope>NUCLEOTIDE SEQUENCE [LARGE SCALE MRNA]</scope>
    <source>
        <strain>cv. Columbia</strain>
    </source>
</reference>
<reference key="6">
    <citation type="journal article" date="2003" name="Science">
        <title>Empirical analysis of transcriptional activity in the Arabidopsis genome.</title>
        <authorList>
            <person name="Yamada K."/>
            <person name="Lim J."/>
            <person name="Dale J.M."/>
            <person name="Chen H."/>
            <person name="Shinn P."/>
            <person name="Palm C.J."/>
            <person name="Southwick A.M."/>
            <person name="Wu H.C."/>
            <person name="Kim C.J."/>
            <person name="Nguyen M."/>
            <person name="Pham P.K."/>
            <person name="Cheuk R.F."/>
            <person name="Karlin-Newmann G."/>
            <person name="Liu S.X."/>
            <person name="Lam B."/>
            <person name="Sakano H."/>
            <person name="Wu T."/>
            <person name="Yu G."/>
            <person name="Miranda M."/>
            <person name="Quach H.L."/>
            <person name="Tripp M."/>
            <person name="Chang C.H."/>
            <person name="Lee J.M."/>
            <person name="Toriumi M.J."/>
            <person name="Chan M.M."/>
            <person name="Tang C.C."/>
            <person name="Onodera C.S."/>
            <person name="Deng J.M."/>
            <person name="Akiyama K."/>
            <person name="Ansari Y."/>
            <person name="Arakawa T."/>
            <person name="Banh J."/>
            <person name="Banno F."/>
            <person name="Bowser L."/>
            <person name="Brooks S.Y."/>
            <person name="Carninci P."/>
            <person name="Chao Q."/>
            <person name="Choy N."/>
            <person name="Enju A."/>
            <person name="Goldsmith A.D."/>
            <person name="Gurjal M."/>
            <person name="Hansen N.F."/>
            <person name="Hayashizaki Y."/>
            <person name="Johnson-Hopson C."/>
            <person name="Hsuan V.W."/>
            <person name="Iida K."/>
            <person name="Karnes M."/>
            <person name="Khan S."/>
            <person name="Koesema E."/>
            <person name="Ishida J."/>
            <person name="Jiang P.X."/>
            <person name="Jones T."/>
            <person name="Kawai J."/>
            <person name="Kamiya A."/>
            <person name="Meyers C."/>
            <person name="Nakajima M."/>
            <person name="Narusaka M."/>
            <person name="Seki M."/>
            <person name="Sakurai T."/>
            <person name="Satou M."/>
            <person name="Tamse R."/>
            <person name="Vaysberg M."/>
            <person name="Wallender E.K."/>
            <person name="Wong C."/>
            <person name="Yamamura Y."/>
            <person name="Yuan S."/>
            <person name="Shinozaki K."/>
            <person name="Davis R.W."/>
            <person name="Theologis A."/>
            <person name="Ecker J.R."/>
        </authorList>
    </citation>
    <scope>NUCLEOTIDE SEQUENCE [LARGE SCALE MRNA]</scope>
    <source>
        <strain>cv. Columbia</strain>
    </source>
</reference>
<reference key="7">
    <citation type="submission" date="2002-03" db="EMBL/GenBank/DDBJ databases">
        <title>Full-length cDNA from Arabidopsis thaliana.</title>
        <authorList>
            <person name="Brover V.V."/>
            <person name="Troukhan M.E."/>
            <person name="Alexandrov N.A."/>
            <person name="Lu Y.-P."/>
            <person name="Flavell R.B."/>
            <person name="Feldmann K.A."/>
        </authorList>
    </citation>
    <scope>NUCLEOTIDE SEQUENCE [LARGE SCALE MRNA]</scope>
</reference>
<reference key="8">
    <citation type="journal article" date="2000" name="EMBO J.">
        <title>Stress induces peroxisome biogenesis genes.</title>
        <authorList>
            <person name="Lopez-Huertas E."/>
            <person name="Charlton W.L."/>
            <person name="Johnson B."/>
            <person name="Graham I.A."/>
            <person name="Baker A."/>
        </authorList>
    </citation>
    <scope>INDUCTION BY HYDROGEN PEROXIDE</scope>
    <source>
        <strain>cv. Columbia</strain>
    </source>
</reference>
<reference key="9">
    <citation type="journal article" date="2003" name="Plant Physiol.">
        <title>An Arabidopsis pex10 null mutant is embryo lethal, implicating peroxisomes in an essential role during plant embryogenesis.</title>
        <authorList>
            <person name="Sparkes I.A."/>
            <person name="Brandizzi F."/>
            <person name="Slocombe S.P."/>
            <person name="El-Shami M."/>
            <person name="Hawes C."/>
            <person name="Baker A."/>
        </authorList>
    </citation>
    <scope>FUNCTION</scope>
    <scope>SUBCELLULAR LOCATION</scope>
    <scope>TISSUE SPECIFICITY</scope>
    <scope>DISRUPTION PHENOTYPE</scope>
</reference>
<reference key="10">
    <citation type="journal article" date="2003" name="Proc. Natl. Acad. Sci. U.S.A.">
        <title>AthPEX10, a nuclear gene essential for peroxisome and storage organelle formation during Arabidopsis embryogenesis.</title>
        <authorList>
            <person name="Schumann U."/>
            <person name="Wanner G."/>
            <person name="Veenhuis M."/>
            <person name="Schmid M."/>
            <person name="Gietl C."/>
        </authorList>
    </citation>
    <scope>FUNCTION</scope>
    <scope>DISRUPTION PHENOTYPE</scope>
</reference>
<reference key="11">
    <citation type="journal article" date="2005" name="Plant Physiol.">
        <title>AtPEX2 and AtPEX10 are targeted to peroxisomes independently of known endoplasmic reticulum trafficking routes.</title>
        <authorList>
            <person name="Sparkes I.A."/>
            <person name="Hawes C."/>
            <person name="Baker A."/>
        </authorList>
    </citation>
    <scope>SUBCELLULAR LOCATION</scope>
    <source>
        <strain>cv. Columbia</strain>
    </source>
</reference>
<reference key="12">
    <citation type="journal article" date="2006" name="Mol. Membr. Biol.">
        <title>Arabidopsis PEX19 is a dimeric protein that binds the peroxin PEX10.</title>
        <authorList>
            <person name="Hadden D.A."/>
            <person name="Phillipson B.A."/>
            <person name="Johnston K.A."/>
            <person name="Brown L.A."/>
            <person name="Manfield I.W."/>
            <person name="El-Shami M."/>
            <person name="Sparkes I.A."/>
            <person name="Baker A."/>
        </authorList>
    </citation>
    <scope>INTERACTION WITH PEX19-1</scope>
</reference>
<reference key="13">
    <citation type="journal article" date="2007" name="Plant Cell Physiol.">
        <title>Functional classification of Arabidopsis peroxisome biogenesis factors proposed from analyses of knockdown mutants.</title>
        <authorList>
            <person name="Nito K."/>
            <person name="Kamigaki A."/>
            <person name="Kondo M."/>
            <person name="Hayashi M."/>
            <person name="Nishimura M."/>
        </authorList>
    </citation>
    <scope>FUNCTION</scope>
</reference>
<reference key="14">
    <citation type="journal article" date="2007" name="Proc. Natl. Acad. Sci. U.S.A.">
        <title>Requirement of the C3HC4 zinc RING finger of the Arabidopsis PEX10 for photorespiration and leaf peroxisome contact with chloroplasts.</title>
        <authorList>
            <person name="Schumann U."/>
            <person name="Prestele J."/>
            <person name="O'Geen H."/>
            <person name="Brueggeman R."/>
            <person name="Wanner G."/>
            <person name="Gietl C."/>
        </authorList>
    </citation>
    <scope>FUNCTION</scope>
    <scope>DISRUPTION PHENOTYPE</scope>
    <scope>MUTAGENESIS OF CYS-342; HIS-344; CYS-347 AND CYS-350</scope>
</reference>
<reference key="15">
    <citation type="journal article" date="2010" name="Proc. Natl. Acad. Sci. U.S.A.">
        <title>Different functions of the C3HC4 zinc RING finger peroxins PEX10, PEX2, and PEX12 in peroxisome formation and matrix protein import.</title>
        <authorList>
            <person name="Prestele J."/>
            <person name="Hierl G."/>
            <person name="Scherling C."/>
            <person name="Hetkamp S."/>
            <person name="Schwechheimer C."/>
            <person name="Isono E."/>
            <person name="Weckwerth W."/>
            <person name="Wanner G."/>
            <person name="Gietl C."/>
        </authorList>
    </citation>
    <scope>FUNCTION</scope>
    <scope>MUTAGENESIS OF GLY-93 AND PRO-126</scope>
</reference>
<reference key="16">
    <citation type="journal article" date="2013" name="J. Integr. Plant Biol.">
        <title>Arabidopsis RING peroxins are E3 ubiquitin ligases that interact with two homologous ubiquitin receptor proteins(F).</title>
        <authorList>
            <person name="Kaur N."/>
            <person name="Zhao Q."/>
            <person name="Xie Q."/>
            <person name="Hu J."/>
        </authorList>
    </citation>
    <scope>FUNCTION</scope>
</reference>
<reference key="17">
    <citation type="journal article" date="2014" name="Plant Physiol.">
        <title>Peroxisomal ubiquitin-protein ligases peroxin2 and peroxin10 have distinct but synergistic roles in matrix protein import and peroxin5 retrotranslocation in Arabidopsis.</title>
        <authorList>
            <person name="Burkhart S.E."/>
            <person name="Kao Y.T."/>
            <person name="Bartel B."/>
        </authorList>
    </citation>
    <scope>FUNCTION</scope>
    <scope>MUTAGENESIS OF PRO-126 AND 313-TRP--PHE-381</scope>
</reference>
<sequence length="381" mass="42614">MRLNGDSGPGQDEPGSSGFHGGIRRFPLAAQPEIMRAAEKDDQYASFIHEACRDAFRHLFGTRIALAYQKEMKLLGQMLYYVLTTGSGQQTLGEEYCDIIQVAGPYGLSPTPARRALFILYQTAVPYIAERISTRAATQAVTFDESDEFFGDSHIHSPRMIDLPSSSQVETSTSVVSRLNDRLMRSWHRAIQRWPVVLPVAREVLQLVLRANLMLFYFEGFYYHISKRASGVRYVFIGKQLNQRPRYQILGVFLLIQLCILAAEGLRRSNLSSITSSIQQASIGSYQTSGGRGLPVLNEEGNLITSEAEKGNWSTSDSTSTEAVGKCTLCLSTRQHPTATPCGHVFCWSCIMEWCNEKQECPLCRTPNTHSSLVCLYHSDF</sequence>
<feature type="chain" id="PRO_0000056382" description="Peroxisome biogenesis factor 10">
    <location>
        <begin position="1"/>
        <end position="381"/>
    </location>
</feature>
<feature type="topological domain" description="Peroxisomal matrix" evidence="1">
    <location>
        <begin position="1"/>
        <end position="30"/>
    </location>
</feature>
<feature type="transmembrane region" description="Helical; Name=TM1" evidence="1">
    <location>
        <begin position="31"/>
        <end position="60"/>
    </location>
</feature>
<feature type="topological domain" description="Cytoplasmic" evidence="1">
    <location>
        <position position="61"/>
    </location>
</feature>
<feature type="transmembrane region" description="Helical; Name=TM2" evidence="1">
    <location>
        <begin position="62"/>
        <end position="83"/>
    </location>
</feature>
<feature type="topological domain" description="Peroxisomal matrix" evidence="1">
    <location>
        <begin position="84"/>
        <end position="112"/>
    </location>
</feature>
<feature type="transmembrane region" description="Helical; Name=TM3" evidence="1">
    <location>
        <begin position="113"/>
        <end position="154"/>
    </location>
</feature>
<feature type="topological domain" description="Cytoplasmic" evidence="1">
    <location>
        <begin position="155"/>
        <end position="178"/>
    </location>
</feature>
<feature type="transmembrane region" description="Helical; Name=TM4" evidence="1">
    <location>
        <begin position="179"/>
        <end position="219"/>
    </location>
</feature>
<feature type="topological domain" description="Peroxisomal matrix" evidence="1">
    <location>
        <begin position="220"/>
        <end position="246"/>
    </location>
</feature>
<feature type="transmembrane region" description="Helical; Name=TM5" evidence="1">
    <location>
        <begin position="247"/>
        <end position="266"/>
    </location>
</feature>
<feature type="topological domain" description="Cytoplasmic" evidence="1">
    <location>
        <begin position="267"/>
        <end position="381"/>
    </location>
</feature>
<feature type="zinc finger region" description="RING-type" evidence="5">
    <location>
        <begin position="327"/>
        <end position="365"/>
    </location>
</feature>
<feature type="region of interest" description="Disordered" evidence="6">
    <location>
        <begin position="1"/>
        <end position="22"/>
    </location>
</feature>
<feature type="binding site" evidence="1">
    <location>
        <position position="327"/>
    </location>
    <ligand>
        <name>Zn(2+)</name>
        <dbReference type="ChEBI" id="CHEBI:29105"/>
        <label>1</label>
    </ligand>
</feature>
<feature type="binding site" evidence="1">
    <location>
        <position position="330"/>
    </location>
    <ligand>
        <name>Zn(2+)</name>
        <dbReference type="ChEBI" id="CHEBI:29105"/>
        <label>1</label>
    </ligand>
</feature>
<feature type="binding site" evidence="1">
    <location>
        <position position="342"/>
    </location>
    <ligand>
        <name>Zn(2+)</name>
        <dbReference type="ChEBI" id="CHEBI:29105"/>
        <label>2</label>
    </ligand>
</feature>
<feature type="binding site" evidence="1">
    <location>
        <position position="344"/>
    </location>
    <ligand>
        <name>Zn(2+)</name>
        <dbReference type="ChEBI" id="CHEBI:29105"/>
        <label>2</label>
    </ligand>
</feature>
<feature type="binding site" evidence="1">
    <location>
        <position position="347"/>
    </location>
    <ligand>
        <name>Zn(2+)</name>
        <dbReference type="ChEBI" id="CHEBI:29105"/>
        <label>1</label>
    </ligand>
</feature>
<feature type="binding site" evidence="1">
    <location>
        <position position="350"/>
    </location>
    <ligand>
        <name>Zn(2+)</name>
        <dbReference type="ChEBI" id="CHEBI:29105"/>
        <label>1</label>
    </ligand>
</feature>
<feature type="binding site" evidence="1">
    <location>
        <position position="361"/>
    </location>
    <ligand>
        <name>Zn(2+)</name>
        <dbReference type="ChEBI" id="CHEBI:29105"/>
        <label>2</label>
    </ligand>
</feature>
<feature type="binding site" evidence="1">
    <location>
        <position position="364"/>
    </location>
    <ligand>
        <name>Zn(2+)</name>
        <dbReference type="ChEBI" id="CHEBI:29105"/>
        <label>2</label>
    </ligand>
</feature>
<feature type="mutagenesis site" description="Deformed peroxisomes, but no effect on contacts with chloroplasts and on protein import." evidence="14">
    <original>G</original>
    <variation>E</variation>
    <location>
        <position position="93"/>
    </location>
</feature>
<feature type="mutagenesis site" description="In pex2-1 mutant; lethal mutant; defects peroxisomal matrix protein degradation. No effects on peroxisome shape, contacts with chloroplasts and protein import." evidence="14 16">
    <original>P</original>
    <variation>S</variation>
    <location>
        <position position="126"/>
    </location>
</feature>
<feature type="mutagenesis site" description="In pex10-2 mutant; defects peroxisomal matrix protein degradation." evidence="16">
    <location>
        <begin position="313"/>
        <end position="381"/>
    </location>
</feature>
<feature type="mutagenesis site" description="Embryo lethality; when associated with L-344; G-347 and G-350." evidence="12">
    <original>C</original>
    <variation>G</variation>
    <location>
        <position position="342"/>
    </location>
</feature>
<feature type="mutagenesis site" description="Embryo lethality; when associated with G-342; G-347 and G-350." evidence="12">
    <original>H</original>
    <variation>L</variation>
    <location>
        <position position="344"/>
    </location>
</feature>
<feature type="mutagenesis site" description="Embryo lethality; when associated with G-342; L-344 and G-350." evidence="12">
    <original>C</original>
    <variation>G</variation>
    <location>
        <position position="347"/>
    </location>
</feature>
<feature type="mutagenesis site" description="Embryo lethality; when associated with G-342; L-344 and G-347." evidence="12">
    <original>C</original>
    <variation>G</variation>
    <location>
        <position position="350"/>
    </location>
</feature>
<feature type="sequence conflict" description="In Ref. 2; CAB87983 and 7; AAM64667." evidence="17" ref="2 7">
    <original>M</original>
    <variation>K</variation>
    <location>
        <position position="184"/>
    </location>
</feature>
<feature type="sequence conflict" description="In Ref. 2; CAB87983." evidence="17" ref="2">
    <original>P</original>
    <variation>L</variation>
    <location>
        <position position="199"/>
    </location>
</feature>
<feature type="sequence conflict" description="In Ref. 7; AAM64667." evidence="17" ref="7">
    <original>F</original>
    <variation>S</variation>
    <location>
        <position position="218"/>
    </location>
</feature>
<feature type="sequence conflict" description="In Ref. 7; AAM64667." evidence="17" ref="7">
    <original>K</original>
    <variation>N</variation>
    <location>
        <position position="358"/>
    </location>
</feature>
<comment type="function">
    <text evidence="3 8 9 12 13 14 15 16">E3 ubiquitin-protein ligase component of a retrotranslocation channel required for peroxisome organization by mediating export of the PEX5 receptor from peroxisomes to the cytosol, thereby promoting PEX5 recycling (PubMed:12883010, PubMed:14576288, PubMed:17215364, PubMed:17478547, PubMed:20679226, PubMed:23336935, PubMed:25214533). The retrotranslocation channel is composed of PEX2, PEX10 and PEX12; each subunit contributing transmembrane segments that coassemble into an open channel that specifically allows the passage of PEX5 through the peroxisomal membrane (By similarity). PEX10 also regulates PEX5 recycling by acting as a E3 ubiquitin-protein ligase (PubMed:23336935, PubMed:25214533). When PEX5 recycling is compromised, PEX10 catalyzes polyubiquitination of PEX5 during its passage through the retrotranslocation channel, leading to its degradation (By similarity).</text>
</comment>
<comment type="catalytic activity">
    <reaction evidence="2">
        <text>S-ubiquitinyl-[E2 ubiquitin-conjugating enzyme]-L-cysteine + [acceptor protein]-L-lysine = [E2 ubiquitin-conjugating enzyme]-L-cysteine + N(6)-ubiquitinyl-[acceptor protein]-L-lysine.</text>
        <dbReference type="EC" id="2.3.2.27"/>
    </reaction>
</comment>
<comment type="activity regulation">
    <text evidence="2">The E3 ubiquitin-protein ligase activity is stimulated by PEX12.</text>
</comment>
<comment type="pathway">
    <text evidence="2">Protein modification; protein ubiquitination.</text>
</comment>
<comment type="subunit">
    <text evidence="2 11">Component of the PEX2-PEX10-PEX12 retrotranslocation channel (By similarity). Interacts (via C-terminus) with PEX19-1.</text>
</comment>
<comment type="interaction">
    <interactant intactId="EBI-1151983">
        <id>Q9SYU4</id>
    </interactant>
    <interactant intactId="EBI-1151789">
        <id>Q9SRQ3</id>
        <label>PEX19-1</label>
    </interactant>
    <organismsDiffer>false</organismsDiffer>
    <experiments>2</experiments>
</comment>
<comment type="subcellular location">
    <subcellularLocation>
        <location evidence="9 10">Peroxisome membrane</location>
        <topology evidence="4">Multi-pass membrane protein</topology>
    </subcellularLocation>
</comment>
<comment type="tissue specificity">
    <text evidence="9">Expressed in roots, stems, leaves, flowers and siliques.</text>
</comment>
<comment type="developmental stage">
    <text>Increased expression in early post-germinative growth.</text>
</comment>
<comment type="induction">
    <text evidence="7">Up-regulated by hydrogen peroxide.</text>
</comment>
<comment type="disruption phenotype">
    <text evidence="8 9 12">Embryo lethality at the heart stage.</text>
</comment>
<comment type="similarity">
    <text evidence="17">Belongs to the pex2/pex10/pex12 family.</text>
</comment>
<comment type="sequence caution" evidence="17">
    <conflict type="erroneous gene model prediction">
        <sequence resource="EMBL-CDS" id="AAM14959"/>
    </conflict>
</comment>
<keyword id="KW-0472">Membrane</keyword>
<keyword id="KW-0479">Metal-binding</keyword>
<keyword id="KW-0576">Peroxisome</keyword>
<keyword id="KW-0962">Peroxisome biogenesis</keyword>
<keyword id="KW-0653">Protein transport</keyword>
<keyword id="KW-1185">Reference proteome</keyword>
<keyword id="KW-0808">Transferase</keyword>
<keyword id="KW-0812">Transmembrane</keyword>
<keyword id="KW-1133">Transmembrane helix</keyword>
<keyword id="KW-0813">Transport</keyword>
<keyword id="KW-0833">Ubl conjugation pathway</keyword>
<keyword id="KW-0862">Zinc</keyword>
<keyword id="KW-0863">Zinc-finger</keyword>
<evidence type="ECO:0000250" key="1">
    <source>
        <dbReference type="UniProtKB" id="G2Q0E2"/>
    </source>
</evidence>
<evidence type="ECO:0000250" key="2">
    <source>
        <dbReference type="UniProtKB" id="O60683"/>
    </source>
</evidence>
<evidence type="ECO:0000250" key="3">
    <source>
        <dbReference type="UniProtKB" id="Q05568"/>
    </source>
</evidence>
<evidence type="ECO:0000255" key="4"/>
<evidence type="ECO:0000255" key="5">
    <source>
        <dbReference type="PROSITE-ProRule" id="PRU00175"/>
    </source>
</evidence>
<evidence type="ECO:0000256" key="6">
    <source>
        <dbReference type="SAM" id="MobiDB-lite"/>
    </source>
</evidence>
<evidence type="ECO:0000269" key="7">
    <source>
    </source>
</evidence>
<evidence type="ECO:0000269" key="8">
    <source>
    </source>
</evidence>
<evidence type="ECO:0000269" key="9">
    <source>
    </source>
</evidence>
<evidence type="ECO:0000269" key="10">
    <source>
    </source>
</evidence>
<evidence type="ECO:0000269" key="11">
    <source>
    </source>
</evidence>
<evidence type="ECO:0000269" key="12">
    <source>
    </source>
</evidence>
<evidence type="ECO:0000269" key="13">
    <source>
    </source>
</evidence>
<evidence type="ECO:0000269" key="14">
    <source>
    </source>
</evidence>
<evidence type="ECO:0000269" key="15">
    <source>
    </source>
</evidence>
<evidence type="ECO:0000269" key="16">
    <source>
    </source>
</evidence>
<evidence type="ECO:0000305" key="17"/>